<feature type="chain" id="PRO_0000222360" description="Protein X">
    <location>
        <begin position="1"/>
        <end position="154"/>
    </location>
</feature>
<feature type="region of interest" description="Mitochondrial targeting sequence" evidence="1">
    <location>
        <begin position="68"/>
        <end position="117"/>
    </location>
</feature>
<feature type="sequence conflict" description="In Ref. 2; CAA84789." ref="2">
    <original>E</original>
    <variation>A</variation>
    <location>
        <position position="80"/>
    </location>
</feature>
<feature type="sequence conflict" description="In Ref. 2; CAA84789." ref="2">
    <original>S</original>
    <variation>C</variation>
    <location>
        <position position="115"/>
    </location>
</feature>
<feature type="sequence conflict" description="In Ref. 2; CAA84789." ref="2">
    <original>KV</original>
    <variation>MI</variation>
    <location>
        <begin position="130"/>
        <end position="131"/>
    </location>
</feature>
<name>X_HBVA2</name>
<keyword id="KW-1074">Activation of host NF-kappa-B by virus</keyword>
<keyword id="KW-0010">Activator</keyword>
<keyword id="KW-0053">Apoptosis</keyword>
<keyword id="KW-1035">Host cytoplasm</keyword>
<keyword id="KW-1079">Host G2/M cell cycle arrest by virus</keyword>
<keyword id="KW-1045">Host mitochondrion</keyword>
<keyword id="KW-1048">Host nucleus</keyword>
<keyword id="KW-0945">Host-virus interaction</keyword>
<keyword id="KW-1121">Modulation of host cell cycle by virus</keyword>
<keyword id="KW-0804">Transcription</keyword>
<keyword id="KW-0805">Transcription regulation</keyword>
<evidence type="ECO:0000255" key="1">
    <source>
        <dbReference type="HAMAP-Rule" id="MF_04074"/>
    </source>
</evidence>
<gene>
    <name evidence="1" type="primary">X</name>
</gene>
<sequence length="154" mass="16567">MAARLYCQLDPSRDVLCLRPVGAESRGRPLSGPLGTLSSPSPSAVPADHGAHLSLRGLPVCAFSSAGPCALRFTSARCMETTVNAHQILPKVLHKRTLGLPAMSTTDLEAYFKDSVFKDWEELGEEIRLKVFVLGGCRHKLVCAPAPCNFFTSA</sequence>
<protein>
    <recommendedName>
        <fullName evidence="1">Protein X</fullName>
    </recommendedName>
    <alternativeName>
        <fullName evidence="1">HBx</fullName>
    </alternativeName>
    <alternativeName>
        <fullName evidence="1">Peptide X</fullName>
    </alternativeName>
    <alternativeName>
        <fullName evidence="1">pX</fullName>
    </alternativeName>
</protein>
<comment type="function">
    <text evidence="1">Multifunctional protein that plays a role in silencing host antiviral defenses and promoting viral transcription. Does not seem to be essential for HBV infection. May be directly involved in development of cirrhosis and liver cancer (hepatocellular carcinoma). Most of cytosolic activities involve modulation of cytosolic calcium. The effect on apoptosis is controversial depending on the cell types in which the studies have been conducted. May induce apoptosis by localizing in mitochondria and causing loss of mitochondrial membrane potential. May also modulate apoptosis by binding host CFLAR, a key regulator of the death-inducing signaling complex (DISC). Promotes viral transcription by using the host E3 ubiquitin ligase DDB1 to target the SMC5-SMC6 complex to proteasomal degradation. This host complex would otherwise bind to viral episomal DNA, and prevents its transcription. Moderately stimulates transcription of many different viral and cellular transcription elements. Promoters and enhancers stimulated by HBx contain DNA binding sites for NF-kappa-B, AP-1, AP-2, c-EBP, ATF/CREB, or the calcium-activated factor NF-AT.</text>
</comment>
<comment type="subunit">
    <text evidence="1">May form homodimer. May interact with host CEBPA, CFLAR, CREB1, DDB1, E4F1, HBXIP, HSPD1/HSP60, NFKBIA, POLR2E and SMAD4. Interacts with host SMC5-SMC6 complex and induces its degradation. Interacts with host TRPC4AP; leading to prevent ubiquitination of TRPC4AP. Interacts with host PLSCR1; this interaction promotes ubiquitination and degradation of HBx and impairs HBx-mediated cell proliferation.</text>
</comment>
<comment type="subcellular location">
    <subcellularLocation>
        <location evidence="1">Host cytoplasm</location>
    </subcellularLocation>
    <subcellularLocation>
        <location evidence="1">Host nucleus</location>
    </subcellularLocation>
    <subcellularLocation>
        <location evidence="1">Host mitochondrion</location>
    </subcellularLocation>
    <text evidence="1">Mainly cytoplasmic as only a fraction is detected in the nucleus. In cytoplasm, a minor fraction associates with mitochondria or proteasomes.</text>
</comment>
<comment type="PTM">
    <text evidence="1">A fraction may be phosphorylated in insect cells and HepG2 cells, a human hepatoblastoma cell line. Phosphorylated in vitro by host protein kinase C or mitogen-activated protein kinase. N-acetylated in insect cells.</text>
</comment>
<comment type="similarity">
    <text evidence="1">Belongs to the orthohepadnavirus protein X family.</text>
</comment>
<comment type="caution">
    <text>Transcriptional activities should be taken with a grain of salt. As of 2007, all studies demonstrating in vivo interaction between protein X and transcriptional components were performed with significant overexpression of both proteins and in the absence of viral infection.</text>
</comment>
<proteinExistence type="inferred from homology"/>
<organismHost>
    <name type="scientific">Homo sapiens</name>
    <name type="common">Human</name>
    <dbReference type="NCBI Taxonomy" id="9606"/>
</organismHost>
<organismHost>
    <name type="scientific">Pan troglodytes</name>
    <name type="common">Chimpanzee</name>
    <dbReference type="NCBI Taxonomy" id="9598"/>
</organismHost>
<reference key="1">
    <citation type="journal article" date="1988" name="Virology">
        <title>Characteristics of the X gene of hepatitis B virus.</title>
        <authorList>
            <person name="Lo S.J."/>
            <person name="Chien M.L."/>
            <person name="Lee Y.H.W."/>
        </authorList>
    </citation>
    <scope>NUCLEOTIDE SEQUENCE [GENOMIC DNA]</scope>
</reference>
<reference key="2">
    <citation type="journal article" date="1983" name="Nucleic Acids Res.">
        <title>The complete nucleotide sequences of the cloned hepatitis B virus DNA; subtype adr and adw.</title>
        <authorList>
            <person name="Ono Y."/>
            <person name="Onda H."/>
            <person name="Sasada R."/>
            <person name="Igarashi K."/>
            <person name="Sugino Y."/>
            <person name="Nishioka K."/>
        </authorList>
    </citation>
    <scope>NUCLEOTIDE SEQUENCE [GENOMIC DNA]</scope>
</reference>
<reference key="3">
    <citation type="submission" date="1994-08" db="EMBL/GenBank/DDBJ databases">
        <authorList>
            <person name="Plucienniczak A."/>
        </authorList>
    </citation>
    <scope>NUCLEOTIDE SEQUENCE [GENOMIC DNA]</scope>
</reference>
<reference key="4">
    <citation type="journal article" date="1989" name="Biochem. Biophys. Res. Commun.">
        <title>Dimerization of hepatitis B viral X protein synthesized in a cell-free system.</title>
        <authorList>
            <person name="Lin M.H."/>
            <person name="Lo S.C."/>
        </authorList>
    </citation>
    <scope>HOMODIMERIZATION</scope>
</reference>
<reference key="5">
    <citation type="journal article" date="2004" name="J. Virol.">
        <title>The enigmatic X gene of hepatitis B virus.</title>
        <authorList>
            <person name="Bouchard M.J."/>
            <person name="Schneider R.J."/>
        </authorList>
    </citation>
    <scope>REVIEW</scope>
</reference>
<reference key="6">
    <citation type="journal article" date="2006" name="Cancer Sci.">
        <title>Molecular functions and biological roles of hepatitis B virus x protein.</title>
        <authorList>
            <person name="Tang H."/>
            <person name="Oishi N."/>
            <person name="Kaneko S."/>
            <person name="Murakami S."/>
        </authorList>
    </citation>
    <scope>REVIEW</scope>
</reference>
<dbReference type="EMBL" id="M23692">
    <property type="protein sequence ID" value="AAA56820.1"/>
    <property type="molecule type" value="Genomic_DNA"/>
</dbReference>
<dbReference type="EMBL" id="V00866">
    <property type="status" value="NOT_ANNOTATED_CDS"/>
    <property type="molecule type" value="Genomic_DNA"/>
</dbReference>
<dbReference type="EMBL" id="Z35717">
    <property type="protein sequence ID" value="CAA84789.1"/>
    <property type="molecule type" value="Genomic_DNA"/>
</dbReference>
<dbReference type="PIR" id="A31289">
    <property type="entry name" value="QQVLAW"/>
</dbReference>
<dbReference type="SMR" id="P69714"/>
<dbReference type="Proteomes" id="UP000007906">
    <property type="component" value="Genome"/>
</dbReference>
<dbReference type="Proteomes" id="UP000100701">
    <property type="component" value="Genome"/>
</dbReference>
<dbReference type="GO" id="GO:0033650">
    <property type="term" value="C:host cell mitochondrion"/>
    <property type="evidence" value="ECO:0007669"/>
    <property type="project" value="UniProtKB-SubCell"/>
</dbReference>
<dbReference type="GO" id="GO:0042025">
    <property type="term" value="C:host cell nucleus"/>
    <property type="evidence" value="ECO:0007669"/>
    <property type="project" value="UniProtKB-SubCell"/>
</dbReference>
<dbReference type="GO" id="GO:0006351">
    <property type="term" value="P:DNA-templated transcription"/>
    <property type="evidence" value="ECO:0007669"/>
    <property type="project" value="UniProtKB-UniRule"/>
</dbReference>
<dbReference type="GO" id="GO:0085033">
    <property type="term" value="P:symbiont-mediated activation of host NF-kappaB cascade"/>
    <property type="evidence" value="ECO:0007669"/>
    <property type="project" value="UniProtKB-UniRule"/>
</dbReference>
<dbReference type="GO" id="GO:0039592">
    <property type="term" value="P:symbiont-mediated arrest of host cell cycle during G2/M transition"/>
    <property type="evidence" value="ECO:0007669"/>
    <property type="project" value="UniProtKB-UniRule"/>
</dbReference>
<dbReference type="GO" id="GO:0019079">
    <property type="term" value="P:viral genome replication"/>
    <property type="evidence" value="ECO:0007669"/>
    <property type="project" value="UniProtKB-UniRule"/>
</dbReference>
<dbReference type="HAMAP" id="MF_04074">
    <property type="entry name" value="HBV_X"/>
    <property type="match status" value="1"/>
</dbReference>
<dbReference type="InterPro" id="IPR000236">
    <property type="entry name" value="Transactivation_prot_X"/>
</dbReference>
<dbReference type="Pfam" id="PF00739">
    <property type="entry name" value="X"/>
    <property type="match status" value="1"/>
</dbReference>
<organism>
    <name type="scientific">Hepatitis B virus genotype A2 subtype adw (isolate Japan/Nishioka/1983)</name>
    <name type="common">HBV-A</name>
    <dbReference type="NCBI Taxonomy" id="482134"/>
    <lineage>
        <taxon>Viruses</taxon>
        <taxon>Riboviria</taxon>
        <taxon>Pararnavirae</taxon>
        <taxon>Artverviricota</taxon>
        <taxon>Revtraviricetes</taxon>
        <taxon>Blubervirales</taxon>
        <taxon>Hepadnaviridae</taxon>
        <taxon>Orthohepadnavirus</taxon>
        <taxon>Hepatitis B virus</taxon>
    </lineage>
</organism>
<accession>P69714</accession>
<accession>P03166</accession>
<accession>P12935</accession>